<protein>
    <recommendedName>
        <fullName evidence="1">NADH-quinone oxidoreductase subunit C/D</fullName>
        <ecNumber evidence="1">7.1.1.-</ecNumber>
    </recommendedName>
    <alternativeName>
        <fullName evidence="1">NADH dehydrogenase I subunit C/D</fullName>
    </alternativeName>
    <alternativeName>
        <fullName evidence="1">NDH-1 subunit C/D</fullName>
    </alternativeName>
</protein>
<reference key="1">
    <citation type="journal article" date="2006" name="PLoS Biol.">
        <title>Metabolic complementarity and genomics of the dual bacterial symbiosis of sharpshooters.</title>
        <authorList>
            <person name="Wu D."/>
            <person name="Daugherty S.C."/>
            <person name="Van Aken S.E."/>
            <person name="Pai G.H."/>
            <person name="Watkins K.L."/>
            <person name="Khouri H."/>
            <person name="Tallon L.J."/>
            <person name="Zaborsky J.M."/>
            <person name="Dunbar H.E."/>
            <person name="Tran P.L."/>
            <person name="Moran N.A."/>
            <person name="Eisen J.A."/>
        </authorList>
    </citation>
    <scope>NUCLEOTIDE SEQUENCE [LARGE SCALE GENOMIC DNA]</scope>
</reference>
<proteinExistence type="inferred from homology"/>
<dbReference type="EC" id="7.1.1.-" evidence="1"/>
<dbReference type="EMBL" id="CP000238">
    <property type="protein sequence ID" value="ABF14131.1"/>
    <property type="molecule type" value="Genomic_DNA"/>
</dbReference>
<dbReference type="RefSeq" id="WP_011520556.1">
    <property type="nucleotide sequence ID" value="NC_007984.1"/>
</dbReference>
<dbReference type="SMR" id="Q1LT91"/>
<dbReference type="STRING" id="374463.BCI_0379"/>
<dbReference type="KEGG" id="bci:BCI_0379"/>
<dbReference type="HOGENOM" id="CLU_015134_3_2_6"/>
<dbReference type="OrthoDB" id="9801496at2"/>
<dbReference type="Proteomes" id="UP000002427">
    <property type="component" value="Chromosome"/>
</dbReference>
<dbReference type="GO" id="GO:0030964">
    <property type="term" value="C:NADH dehydrogenase complex"/>
    <property type="evidence" value="ECO:0007669"/>
    <property type="project" value="InterPro"/>
</dbReference>
<dbReference type="GO" id="GO:0005886">
    <property type="term" value="C:plasma membrane"/>
    <property type="evidence" value="ECO:0007669"/>
    <property type="project" value="UniProtKB-SubCell"/>
</dbReference>
<dbReference type="GO" id="GO:0051287">
    <property type="term" value="F:NAD binding"/>
    <property type="evidence" value="ECO:0007669"/>
    <property type="project" value="InterPro"/>
</dbReference>
<dbReference type="GO" id="GO:0008137">
    <property type="term" value="F:NADH dehydrogenase (ubiquinone) activity"/>
    <property type="evidence" value="ECO:0007669"/>
    <property type="project" value="InterPro"/>
</dbReference>
<dbReference type="GO" id="GO:0050136">
    <property type="term" value="F:NADH:ubiquinone reductase (non-electrogenic) activity"/>
    <property type="evidence" value="ECO:0007669"/>
    <property type="project" value="UniProtKB-UniRule"/>
</dbReference>
<dbReference type="GO" id="GO:0048038">
    <property type="term" value="F:quinone binding"/>
    <property type="evidence" value="ECO:0007669"/>
    <property type="project" value="UniProtKB-KW"/>
</dbReference>
<dbReference type="FunFam" id="1.10.645.10:FF:000001">
    <property type="entry name" value="NADH-quinone oxidoreductase subunit C/D"/>
    <property type="match status" value="1"/>
</dbReference>
<dbReference type="Gene3D" id="1.10.645.10">
    <property type="entry name" value="Cytochrome-c3 Hydrogenase, chain B"/>
    <property type="match status" value="1"/>
</dbReference>
<dbReference type="Gene3D" id="3.30.460.80">
    <property type="entry name" value="NADH:ubiquinone oxidoreductase, 30kDa subunit"/>
    <property type="match status" value="1"/>
</dbReference>
<dbReference type="HAMAP" id="MF_01359">
    <property type="entry name" value="NDH1_NuoCD_1"/>
    <property type="match status" value="1"/>
</dbReference>
<dbReference type="HAMAP" id="MF_01358">
    <property type="entry name" value="NDH1_NuoD"/>
    <property type="match status" value="1"/>
</dbReference>
<dbReference type="InterPro" id="IPR010218">
    <property type="entry name" value="NADH_DH_suC"/>
</dbReference>
<dbReference type="InterPro" id="IPR023062">
    <property type="entry name" value="NADH_DH_suCD"/>
</dbReference>
<dbReference type="InterPro" id="IPR001135">
    <property type="entry name" value="NADH_Q_OxRdtase_suD"/>
</dbReference>
<dbReference type="InterPro" id="IPR037232">
    <property type="entry name" value="NADH_quin_OxRdtase_su_C/D-like"/>
</dbReference>
<dbReference type="InterPro" id="IPR001268">
    <property type="entry name" value="NADH_UbQ_OxRdtase_30kDa_su"/>
</dbReference>
<dbReference type="InterPro" id="IPR014029">
    <property type="entry name" value="NADH_UbQ_OxRdtase_49kDa_CS"/>
</dbReference>
<dbReference type="InterPro" id="IPR022885">
    <property type="entry name" value="NDH1_su_D/H"/>
</dbReference>
<dbReference type="InterPro" id="IPR029014">
    <property type="entry name" value="NiFe-Hase_large"/>
</dbReference>
<dbReference type="NCBIfam" id="TIGR01961">
    <property type="entry name" value="NuoC_fam"/>
    <property type="match status" value="1"/>
</dbReference>
<dbReference type="NCBIfam" id="TIGR01962">
    <property type="entry name" value="NuoD"/>
    <property type="match status" value="1"/>
</dbReference>
<dbReference type="NCBIfam" id="NF004739">
    <property type="entry name" value="PRK06075.1"/>
    <property type="match status" value="1"/>
</dbReference>
<dbReference type="NCBIfam" id="NF008728">
    <property type="entry name" value="PRK11742.1"/>
    <property type="match status" value="1"/>
</dbReference>
<dbReference type="PANTHER" id="PTHR11993:SF45">
    <property type="entry name" value="NADH-QUINONE OXIDOREDUCTASE SUBUNIT C_D"/>
    <property type="match status" value="1"/>
</dbReference>
<dbReference type="PANTHER" id="PTHR11993">
    <property type="entry name" value="NADH-UBIQUINONE OXIDOREDUCTASE 49 KDA SUBUNIT"/>
    <property type="match status" value="1"/>
</dbReference>
<dbReference type="Pfam" id="PF00329">
    <property type="entry name" value="Complex1_30kDa"/>
    <property type="match status" value="1"/>
</dbReference>
<dbReference type="Pfam" id="PF00346">
    <property type="entry name" value="Complex1_49kDa"/>
    <property type="match status" value="1"/>
</dbReference>
<dbReference type="SUPFAM" id="SSF56762">
    <property type="entry name" value="HydB/Nqo4-like"/>
    <property type="match status" value="1"/>
</dbReference>
<dbReference type="SUPFAM" id="SSF143243">
    <property type="entry name" value="Nqo5-like"/>
    <property type="match status" value="1"/>
</dbReference>
<dbReference type="PROSITE" id="PS00535">
    <property type="entry name" value="COMPLEX1_49K"/>
    <property type="match status" value="1"/>
</dbReference>
<accession>Q1LT91</accession>
<gene>
    <name evidence="1" type="primary">nuoC</name>
    <name evidence="1" type="synonym">nuoCD</name>
    <name evidence="1" type="synonym">nuoD</name>
    <name type="ordered locus">BCI_0379</name>
</gene>
<feature type="chain" id="PRO_0000358620" description="NADH-quinone oxidoreductase subunit C/D">
    <location>
        <begin position="1"/>
        <end position="595"/>
    </location>
</feature>
<feature type="region of interest" description="NADH dehydrogenase I subunit C" evidence="1">
    <location>
        <begin position="1"/>
        <end position="185"/>
    </location>
</feature>
<feature type="region of interest" description="NADH dehydrogenase I subunit D" evidence="1">
    <location>
        <begin position="209"/>
        <end position="595"/>
    </location>
</feature>
<organism>
    <name type="scientific">Baumannia cicadellinicola subsp. Homalodisca coagulata</name>
    <dbReference type="NCBI Taxonomy" id="374463"/>
    <lineage>
        <taxon>Bacteria</taxon>
        <taxon>Pseudomonadati</taxon>
        <taxon>Pseudomonadota</taxon>
        <taxon>Gammaproteobacteria</taxon>
        <taxon>Candidatus Palibaumannia</taxon>
    </lineage>
</organism>
<comment type="function">
    <text evidence="1">NDH-1 shuttles electrons from NADH, via FMN and iron-sulfur (Fe-S) centers, to quinones in the respiratory chain. The immediate electron acceptor for the enzyme in this species is believed to be ubiquinone. Couples the redox reaction to proton translocation (for every two electrons transferred, four hydrogen ions are translocated across the cytoplasmic membrane), and thus conserves the redox energy in a proton gradient.</text>
</comment>
<comment type="catalytic activity">
    <reaction evidence="1">
        <text>a quinone + NADH + 5 H(+)(in) = a quinol + NAD(+) + 4 H(+)(out)</text>
        <dbReference type="Rhea" id="RHEA:57888"/>
        <dbReference type="ChEBI" id="CHEBI:15378"/>
        <dbReference type="ChEBI" id="CHEBI:24646"/>
        <dbReference type="ChEBI" id="CHEBI:57540"/>
        <dbReference type="ChEBI" id="CHEBI:57945"/>
        <dbReference type="ChEBI" id="CHEBI:132124"/>
    </reaction>
</comment>
<comment type="subunit">
    <text evidence="1">NDH-1 is composed of 13 different subunits. Subunits NuoB, CD, E, F, and G constitute the peripheral sector of the complex.</text>
</comment>
<comment type="subcellular location">
    <subcellularLocation>
        <location evidence="1">Cell inner membrane</location>
        <topology evidence="1">Peripheral membrane protein</topology>
        <orientation evidence="1">Cytoplasmic side</orientation>
    </subcellularLocation>
</comment>
<comment type="similarity">
    <text evidence="1">In the N-terminal section; belongs to the complex I 30 kDa subunit family.</text>
</comment>
<comment type="similarity">
    <text evidence="1">In the C-terminal section; belongs to the complex I 49 kDa subunit family.</text>
</comment>
<sequence length="595" mass="68354">MNKNICLSASHKQNNRDDPIINELINYFGNETFTIQSTRIGVPVVWVTREQILDFLIFLKKKPNSYLMLYDLHGVDERLRNNREGLPAVDFTVFYHLLSIKSNSDIILKVPLLEGDISLPTATNIFSNANWYERETWDMFGIIFHGHPHLTRIIMPPSWVGHPLRKDYPARATEFNPFVLTKEKEELEMDSLTFKPEKWGIKHSNHKDDFMFLNFGPNHPSAHGAFRIVLQLDGEEIVDCIPDIGYHHRGVEKMSERQSWHSYIPYTDRVEYLGGCVNEMPYVLAVEKLAGIVVPDRVNVIRIMLSELFRINSHLLYISTYIQDVGGMTPIFLAFTDRQKIYNVVEAITGARMHPAWFRIGGVAHDLPHGWNMLLKELLDWLPNRLEHYVKVALENSILRSRSEGIASYSAKEALEWGVTGAALRATGINFDVRKWRPYSGYDNFEFEIPVGNGISDCYSRVMLKVEEIRQSIRILKQCLHNMPAGPFKADHPLTTPPPKERTLQHIETLISHFLQVSWGPIIPANESFQMIEATKGINSYYLTSDGNTMSYRTRIRTPSFPHLQQIPSVIRGSLISDLIVYLGSIDFVMSDVDR</sequence>
<name>NUOCD_BAUCH</name>
<keyword id="KW-0997">Cell inner membrane</keyword>
<keyword id="KW-1003">Cell membrane</keyword>
<keyword id="KW-0472">Membrane</keyword>
<keyword id="KW-0511">Multifunctional enzyme</keyword>
<keyword id="KW-0520">NAD</keyword>
<keyword id="KW-0874">Quinone</keyword>
<keyword id="KW-1185">Reference proteome</keyword>
<keyword id="KW-1278">Translocase</keyword>
<keyword id="KW-0813">Transport</keyword>
<keyword id="KW-0830">Ubiquinone</keyword>
<evidence type="ECO:0000255" key="1">
    <source>
        <dbReference type="HAMAP-Rule" id="MF_01359"/>
    </source>
</evidence>